<gene>
    <name evidence="5" type="primary">pboD</name>
    <name type="ORF">HK57_00372</name>
</gene>
<proteinExistence type="evidence at protein level"/>
<organism>
    <name type="scientific">Aspergillus ustus</name>
    <dbReference type="NCBI Taxonomy" id="40382"/>
    <lineage>
        <taxon>Eukaryota</taxon>
        <taxon>Fungi</taxon>
        <taxon>Dikarya</taxon>
        <taxon>Ascomycota</taxon>
        <taxon>Pezizomycotina</taxon>
        <taxon>Eurotiomycetes</taxon>
        <taxon>Eurotiomycetidae</taxon>
        <taxon>Eurotiales</taxon>
        <taxon>Aspergillaceae</taxon>
        <taxon>Aspergillus</taxon>
        <taxon>Aspergillus subgen. Nidulantes</taxon>
    </lineage>
</organism>
<protein>
    <recommendedName>
        <fullName evidence="5">Flavin-dependent monooxygenase pboD</fullName>
        <ecNumber evidence="3 4">1.14.13.-</ecNumber>
    </recommendedName>
    <alternativeName>
        <fullName evidence="5">Protubonine biosynthesis cluster protein D</fullName>
    </alternativeName>
</protein>
<sequence>MTIESCPGGRVGEDGITNPSNIRVLVVGVGIGGLAAAIECHRKGHSVILVDKIAQVDPLAGDGIGIGTNGARIIAKWGGGRVHDQILSHRCDTRKIEILNRQGESFGQHELKGYGRDHGYMLNRGQLVSILFDYAGTLGIDKRLGSPVTEYRETEMGAAVVLEGGEVIEADCVICSDGVHGAGRKFVTSLDPVSRESGWAMSRAYLRKEDLKPHRDRDVRILDGTDKQDRMMVWFDHGIQVSMWTVKHGEELVWIVTHKVSVDLSLLPPPTLGTKDARDTWTMEGSESMIEDTISQIHDWPSRNMIEPILRSTPPKRLLNQKIITREPLDRWVSPHGRMIIIGDAAHPYPPISGQGGSQAIEDAAVVAIALQLAGKDHVPLALRIAEKIRSVTSHYLMLQGHHMLKSTGSHPRATAIQTEASHLYELMFKPDWGVVAKNPSILAPPCPKWLFQHDSQAYVYAEFGKIAEAMADGREYVIANTPPSA</sequence>
<dbReference type="EC" id="1.14.13.-" evidence="3 4"/>
<dbReference type="EMBL" id="JOMC01000033">
    <property type="protein sequence ID" value="KIA75845.1"/>
    <property type="molecule type" value="Genomic_DNA"/>
</dbReference>
<dbReference type="SMR" id="A0A0C1C427"/>
<dbReference type="Proteomes" id="UP000053475">
    <property type="component" value="Unassembled WGS sequence"/>
</dbReference>
<dbReference type="GO" id="GO:0071949">
    <property type="term" value="F:FAD binding"/>
    <property type="evidence" value="ECO:0007669"/>
    <property type="project" value="InterPro"/>
</dbReference>
<dbReference type="GO" id="GO:0004497">
    <property type="term" value="F:monooxygenase activity"/>
    <property type="evidence" value="ECO:0007669"/>
    <property type="project" value="UniProtKB-KW"/>
</dbReference>
<dbReference type="GO" id="GO:0009058">
    <property type="term" value="P:biosynthetic process"/>
    <property type="evidence" value="ECO:0007669"/>
    <property type="project" value="UniProtKB-ARBA"/>
</dbReference>
<dbReference type="Gene3D" id="3.50.50.60">
    <property type="entry name" value="FAD/NAD(P)-binding domain"/>
    <property type="match status" value="1"/>
</dbReference>
<dbReference type="InterPro" id="IPR002938">
    <property type="entry name" value="FAD-bd"/>
</dbReference>
<dbReference type="InterPro" id="IPR050493">
    <property type="entry name" value="FAD-dep_Monooxygenase_BioMet"/>
</dbReference>
<dbReference type="InterPro" id="IPR003953">
    <property type="entry name" value="FAD-dep_OxRdtase_2_FAD-bd"/>
</dbReference>
<dbReference type="InterPro" id="IPR036188">
    <property type="entry name" value="FAD/NAD-bd_sf"/>
</dbReference>
<dbReference type="PANTHER" id="PTHR13789">
    <property type="entry name" value="MONOOXYGENASE"/>
    <property type="match status" value="1"/>
</dbReference>
<dbReference type="PANTHER" id="PTHR13789:SF236">
    <property type="entry name" value="MONOOXYGENASE, PUTATIVE (AFU_ORTHOLOGUE AFUA_6G12060)-RELATED"/>
    <property type="match status" value="1"/>
</dbReference>
<dbReference type="Pfam" id="PF00890">
    <property type="entry name" value="FAD_binding_2"/>
    <property type="match status" value="1"/>
</dbReference>
<dbReference type="Pfam" id="PF01494">
    <property type="entry name" value="FAD_binding_3"/>
    <property type="match status" value="1"/>
</dbReference>
<dbReference type="PRINTS" id="PR00420">
    <property type="entry name" value="RNGMNOXGNASE"/>
</dbReference>
<dbReference type="SUPFAM" id="SSF51905">
    <property type="entry name" value="FAD/NAD(P)-binding domain"/>
    <property type="match status" value="1"/>
</dbReference>
<evidence type="ECO:0000250" key="1">
    <source>
        <dbReference type="UniProtKB" id="B8M9J8"/>
    </source>
</evidence>
<evidence type="ECO:0000250" key="2">
    <source>
        <dbReference type="UniProtKB" id="L0E4H0"/>
    </source>
</evidence>
<evidence type="ECO:0000269" key="3">
    <source>
    </source>
</evidence>
<evidence type="ECO:0000269" key="4">
    <source>
    </source>
</evidence>
<evidence type="ECO:0000303" key="5">
    <source>
    </source>
</evidence>
<evidence type="ECO:0000305" key="6"/>
<keyword id="KW-0274">FAD</keyword>
<keyword id="KW-0285">Flavoprotein</keyword>
<keyword id="KW-0503">Monooxygenase</keyword>
<keyword id="KW-0520">NAD</keyword>
<keyword id="KW-0521">NADP</keyword>
<keyword id="KW-0560">Oxidoreductase</keyword>
<keyword id="KW-1185">Reference proteome</keyword>
<comment type="function">
    <text evidence="3 4">Flavin-dependent monooxygenase; part of the gene cluster that mediates the biosynthesis of protubonine B, a hydroxylated and diacetylated cyclo-L-Trp-L-Leu derivative (PubMed:37382166). Within the pathway, pboD catalyzes the hydroxylation at C-3 of the indole ring of cyclo-L-Trp-L-Leu and subsequent formation of the pyrrolidine ring, eading to the production of protubonine D (PubMed:37382166). PboD is also able to accept other cyclodipeptides (CDPs) as substrates, including cyclo-L-Trp-L-Trp, cyclo-L-Trp-L-Tyr, cyclo-L-Trp-L-Phe, cyclo-L-Trp-L-Met, cyclo-L-Trp-L-Ala, cyclo-L-Trp-L-Pro and cyclo-L-Trp-Gly (PubMed:38557026). Assays with cyclo-L-Trp-L-Trp, cyclo-L-Trp-L-Tyr, cyclo-L-Trp-L-Phe show similar or even slightly higher conversion yields, compared with that of the natural substrate cyclo-L-Trp-L-Leu, whereas cyclo-L-Trp-L-Pro and cyclo-L-Trp-Gly are accepted by PboD but only with conversion yields of 10 and 4%, respectively (PubMed:38557026). Cyclo-L-Trp-L-His is not accepted as a substrate (PubMed:38557026). The first step of the protubonine B synthesis is performed by the nonribosomal peptide synthetase pboA that catalyzes the formation of cyclo-L-Trp-L-Leu by condensing L-Leu with L-Trp. The flavin-dependent monooxygenase pboD is responsible for hydroxylation at C-3 of the indole ring and subsequent formation of the pyrrolidine ring, leadind to protubonine D. Protubonine D is further diacetylated by two acetyltransferases, pboB and pboC, to form the final product protubonine B via protubonine C (PubMed:37382166).</text>
</comment>
<comment type="cofactor">
    <cofactor evidence="3">
        <name>FAD</name>
        <dbReference type="ChEBI" id="CHEBI:57692"/>
    </cofactor>
</comment>
<comment type="biophysicochemical properties">
    <kinetics>
        <KM evidence="3 4">0.1 mM for cyclo-L-Trp-L-Leu</KM>
        <KM evidence="4">0.066 mM for cyclo-L-Trp-L-Trp</KM>
        <KM evidence="4">0.056 mM for cyclo-L-Trp-L-Tyr</KM>
        <KM evidence="4">0.052 mM for cyclo-L-Trp-L-Phe</KM>
        <KM evidence="4">0.97 mM for cyclo-L-Trp-L-Met</KM>
        <KM evidence="4">0.12 mM for cyclo-L-Trp-L-Ala</KM>
    </kinetics>
</comment>
<comment type="pathway">
    <text evidence="3">Secondary metabolite biosynthesis.</text>
</comment>
<comment type="disruption phenotype">
    <text evidence="3">Blocks the production of protubonine B and leads to the accumulation of cyclo-L-Trp-L-Le.</text>
</comment>
<comment type="similarity">
    <text evidence="6">Belongs to the paxM FAD-dependent monooxygenase family.</text>
</comment>
<feature type="chain" id="PRO_0000458984" description="Flavin-dependent monooxygenase pboD">
    <location>
        <begin position="1"/>
        <end position="486"/>
    </location>
</feature>
<feature type="active site" evidence="2">
    <location>
        <position position="203"/>
    </location>
</feature>
<feature type="binding site" evidence="1">
    <location>
        <position position="51"/>
    </location>
    <ligand>
        <name>FAD</name>
        <dbReference type="ChEBI" id="CHEBI:57692"/>
    </ligand>
</feature>
<feature type="binding site" evidence="1">
    <location>
        <position position="65"/>
    </location>
    <ligand>
        <name>FAD</name>
        <dbReference type="ChEBI" id="CHEBI:57692"/>
    </ligand>
</feature>
<feature type="binding site" evidence="1">
    <location>
        <position position="124"/>
    </location>
    <ligand>
        <name>FAD</name>
        <dbReference type="ChEBI" id="CHEBI:57692"/>
    </ligand>
</feature>
<feature type="binding site" evidence="1">
    <location>
        <position position="344"/>
    </location>
    <ligand>
        <name>FAD</name>
        <dbReference type="ChEBI" id="CHEBI:57692"/>
    </ligand>
</feature>
<feature type="binding site" evidence="1">
    <location>
        <position position="357"/>
    </location>
    <ligand>
        <name>FAD</name>
        <dbReference type="ChEBI" id="CHEBI:57692"/>
    </ligand>
</feature>
<reference key="1">
    <citation type="journal article" date="2015" name="PLoS ONE">
        <title>A genomics based discovery of secondary metabolite biosynthetic gene clusters in Aspergillus ustus.</title>
        <authorList>
            <person name="Pi B."/>
            <person name="Yu D."/>
            <person name="Dai F."/>
            <person name="Song X."/>
            <person name="Zhu C."/>
            <person name="Li H."/>
            <person name="Yu Y."/>
        </authorList>
    </citation>
    <scope>NUCLEOTIDE SEQUENCE [LARGE SCALE GENOMIC DNA]</scope>
    <source>
        <strain>3.3904</strain>
    </source>
</reference>
<reference key="2">
    <citation type="journal article" date="2023" name="J. Nat. Prod.">
        <title>A flavin-dependent oxygenase catalyzes hydroxylation and simultaneous pyrrolidine ring formation in protubonine biosynthesis in Aspergillus ustus.</title>
        <authorList>
            <person name="Janzen D.J."/>
            <person name="Wang H."/>
            <person name="Li S.M."/>
        </authorList>
    </citation>
    <scope>FUNCTION</scope>
    <scope>DISRUPTION PHENOTYPE</scope>
    <scope>CATALYTIC ACTIVITY</scope>
    <scope>BIOPHYSICOCHEMICAL PROPERTIES</scope>
    <scope>COFACTOR</scope>
    <scope>PATHWAY</scope>
</reference>
<reference key="3">
    <citation type="journal article" date="2024" name="J. Nat. Prod.">
        <title>The promiscuous flavin-dependent monooxygenase PboD from Aspergillus ustus increases the structural diversity of hydroxylated pyrroloindoline diketopiperazines.</title>
        <authorList>
            <person name="Wu M."/>
            <person name="Janzen D.J."/>
            <person name="Guan Z."/>
            <person name="Ye Y."/>
            <person name="Zhang Y."/>
            <person name="Li S.M."/>
        </authorList>
    </citation>
    <scope>FUNCTION</scope>
    <scope>CATALYTIC ACTIVITY</scope>
    <scope>BIOPHYSICOCHEMICAL PROPERTIES</scope>
</reference>
<accession>A0A0C1C427</accession>
<name>PBOD_ASPUT</name>